<organism>
    <name type="scientific">Scyliorhinus canicula</name>
    <name type="common">Small-spotted catshark</name>
    <name type="synonym">Squalus canicula</name>
    <dbReference type="NCBI Taxonomy" id="7830"/>
    <lineage>
        <taxon>Eukaryota</taxon>
        <taxon>Metazoa</taxon>
        <taxon>Chordata</taxon>
        <taxon>Craniata</taxon>
        <taxon>Vertebrata</taxon>
        <taxon>Chondrichthyes</taxon>
        <taxon>Elasmobranchii</taxon>
        <taxon>Galeomorphii</taxon>
        <taxon>Galeoidea</taxon>
        <taxon>Carcharhiniformes</taxon>
        <taxon>Scyliorhinidae</taxon>
        <taxon>Scyliorhinus</taxon>
    </lineage>
</organism>
<comment type="function">
    <text>Displays oxytocic activity on rat uterus.</text>
</comment>
<comment type="subcellular location">
    <subcellularLocation>
        <location>Secreted</location>
    </subcellularLocation>
</comment>
<comment type="similarity">
    <text evidence="2">Belongs to the vasopressin/oxytocin family.</text>
</comment>
<proteinExistence type="evidence at protein level"/>
<evidence type="ECO:0000269" key="1">
    <source>
    </source>
</evidence>
<evidence type="ECO:0000305" key="2"/>
<keyword id="KW-0027">Amidation</keyword>
<keyword id="KW-0903">Direct protein sequencing</keyword>
<keyword id="KW-1015">Disulfide bond</keyword>
<keyword id="KW-0372">Hormone</keyword>
<keyword id="KW-0964">Secreted</keyword>
<sequence length="9" mass="982">CYINNCPVG</sequence>
<feature type="peptide" id="PRO_0000044092" description="Asvatocin">
    <location>
        <begin position="1"/>
        <end position="9"/>
    </location>
</feature>
<feature type="modified residue" description="Glycine amide" evidence="1">
    <location>
        <position position="9"/>
    </location>
</feature>
<feature type="disulfide bond">
    <location>
        <begin position="1"/>
        <end position="6"/>
    </location>
</feature>
<dbReference type="GO" id="GO:0005576">
    <property type="term" value="C:extracellular region"/>
    <property type="evidence" value="ECO:0007669"/>
    <property type="project" value="UniProtKB-SubCell"/>
</dbReference>
<dbReference type="GO" id="GO:0005185">
    <property type="term" value="F:neurohypophyseal hormone activity"/>
    <property type="evidence" value="ECO:0007669"/>
    <property type="project" value="InterPro"/>
</dbReference>
<dbReference type="InterPro" id="IPR022423">
    <property type="entry name" value="Neurohypophysial_hormone_CS"/>
</dbReference>
<dbReference type="PROSITE" id="PS00264">
    <property type="entry name" value="NEUROHYPOPHYS_HORM"/>
    <property type="match status" value="1"/>
</dbReference>
<accession>P42996</accession>
<reference key="1">
    <citation type="journal article" date="1994" name="Proc. Natl. Acad. Sci. U.S.A.">
        <title>Special evolution of neurohypophysial hormones in cartilaginous fishes: asvatocin and phasvatocin, two oxytocin-like peptides isolated from the spotted dogfish (Scyliorhinus caniculus).</title>
        <authorList>
            <person name="Chauvet J."/>
            <person name="Rouille Y."/>
            <person name="Chauveau C."/>
            <person name="Chauvet M.-T."/>
            <person name="Acher R."/>
        </authorList>
    </citation>
    <scope>PROTEIN SEQUENCE</scope>
    <scope>AMIDATION AT GLY-9</scope>
    <source>
        <tissue>Pituitary</tissue>
    </source>
</reference>
<protein>
    <recommendedName>
        <fullName>Asvatocin</fullName>
    </recommendedName>
</protein>
<name>OXYA_SCYCA</name>